<sequence>MVNYPHKLSSQKRQTSLSQPKNFANRGMSFEKMINATNDYYLSQGLAVIHKKPTPIQIVRVDYPQRSRAKIVEAYFRQASTTDYSGVYNGYYIDFEAKETKQKRAIPMKNFHPHQIQHMEQVLAQQGICFVLLHFSSQQETYLLPALDLIRFYHQDKGQKSMPLGYIREYGYEIKAGAFPQIPYLNVIKEHLLGGKTR</sequence>
<protein>
    <recommendedName>
        <fullName evidence="1">Holliday junction resolvase RecU</fullName>
        <ecNumber evidence="1">3.1.21.10</ecNumber>
    </recommendedName>
    <alternativeName>
        <fullName evidence="1">Recombination protein U homolog</fullName>
    </alternativeName>
</protein>
<proteinExistence type="inferred from homology"/>
<gene>
    <name evidence="1" type="primary">recU</name>
    <name type="ordered locus">SPH_0477</name>
</gene>
<accession>B1I9H0</accession>
<dbReference type="EC" id="3.1.21.10" evidence="1"/>
<dbReference type="EMBL" id="CP000936">
    <property type="protein sequence ID" value="ACA37316.1"/>
    <property type="molecule type" value="Genomic_DNA"/>
</dbReference>
<dbReference type="RefSeq" id="WP_000248779.1">
    <property type="nucleotide sequence ID" value="NC_010380.1"/>
</dbReference>
<dbReference type="SMR" id="B1I9H0"/>
<dbReference type="KEGG" id="spv:SPH_0477"/>
<dbReference type="HOGENOM" id="CLU_096340_0_0_9"/>
<dbReference type="Proteomes" id="UP000002163">
    <property type="component" value="Chromosome"/>
</dbReference>
<dbReference type="GO" id="GO:0005737">
    <property type="term" value="C:cytoplasm"/>
    <property type="evidence" value="ECO:0007669"/>
    <property type="project" value="UniProtKB-SubCell"/>
</dbReference>
<dbReference type="GO" id="GO:0004519">
    <property type="term" value="F:endonuclease activity"/>
    <property type="evidence" value="ECO:0007669"/>
    <property type="project" value="UniProtKB-UniRule"/>
</dbReference>
<dbReference type="GO" id="GO:0000287">
    <property type="term" value="F:magnesium ion binding"/>
    <property type="evidence" value="ECO:0007669"/>
    <property type="project" value="UniProtKB-UniRule"/>
</dbReference>
<dbReference type="GO" id="GO:0003676">
    <property type="term" value="F:nucleic acid binding"/>
    <property type="evidence" value="ECO:0007669"/>
    <property type="project" value="InterPro"/>
</dbReference>
<dbReference type="GO" id="GO:0007059">
    <property type="term" value="P:chromosome segregation"/>
    <property type="evidence" value="ECO:0007669"/>
    <property type="project" value="UniProtKB-UniRule"/>
</dbReference>
<dbReference type="GO" id="GO:0006310">
    <property type="term" value="P:DNA recombination"/>
    <property type="evidence" value="ECO:0007669"/>
    <property type="project" value="UniProtKB-UniRule"/>
</dbReference>
<dbReference type="GO" id="GO:0006281">
    <property type="term" value="P:DNA repair"/>
    <property type="evidence" value="ECO:0007669"/>
    <property type="project" value="UniProtKB-UniRule"/>
</dbReference>
<dbReference type="CDD" id="cd22354">
    <property type="entry name" value="RecU-like"/>
    <property type="match status" value="1"/>
</dbReference>
<dbReference type="Gene3D" id="3.40.1350.10">
    <property type="match status" value="1"/>
</dbReference>
<dbReference type="HAMAP" id="MF_00130">
    <property type="entry name" value="RecU"/>
    <property type="match status" value="1"/>
</dbReference>
<dbReference type="InterPro" id="IPR004612">
    <property type="entry name" value="Resolv_RecU"/>
</dbReference>
<dbReference type="InterPro" id="IPR011335">
    <property type="entry name" value="Restrct_endonuc-II-like"/>
</dbReference>
<dbReference type="InterPro" id="IPR011856">
    <property type="entry name" value="tRNA_endonuc-like_dom_sf"/>
</dbReference>
<dbReference type="NCBIfam" id="NF002580">
    <property type="entry name" value="PRK02234.1-1"/>
    <property type="match status" value="1"/>
</dbReference>
<dbReference type="NCBIfam" id="NF002584">
    <property type="entry name" value="PRK02234.1-5"/>
    <property type="match status" value="1"/>
</dbReference>
<dbReference type="NCBIfam" id="TIGR00648">
    <property type="entry name" value="recU"/>
    <property type="match status" value="1"/>
</dbReference>
<dbReference type="Pfam" id="PF03838">
    <property type="entry name" value="RecU"/>
    <property type="match status" value="1"/>
</dbReference>
<dbReference type="PIRSF" id="PIRSF037785">
    <property type="entry name" value="RecU"/>
    <property type="match status" value="1"/>
</dbReference>
<dbReference type="SUPFAM" id="SSF52980">
    <property type="entry name" value="Restriction endonuclease-like"/>
    <property type="match status" value="1"/>
</dbReference>
<name>RECU_STRPI</name>
<reference key="1">
    <citation type="journal article" date="2010" name="Genome Biol.">
        <title>Structure and dynamics of the pan-genome of Streptococcus pneumoniae and closely related species.</title>
        <authorList>
            <person name="Donati C."/>
            <person name="Hiller N.L."/>
            <person name="Tettelin H."/>
            <person name="Muzzi A."/>
            <person name="Croucher N.J."/>
            <person name="Angiuoli S.V."/>
            <person name="Oggioni M."/>
            <person name="Dunning Hotopp J.C."/>
            <person name="Hu F.Z."/>
            <person name="Riley D.R."/>
            <person name="Covacci A."/>
            <person name="Mitchell T.J."/>
            <person name="Bentley S.D."/>
            <person name="Kilian M."/>
            <person name="Ehrlich G.D."/>
            <person name="Rappuoli R."/>
            <person name="Moxon E.R."/>
            <person name="Masignani V."/>
        </authorList>
    </citation>
    <scope>NUCLEOTIDE SEQUENCE [LARGE SCALE GENOMIC DNA]</scope>
    <source>
        <strain>Hungary19A-6</strain>
    </source>
</reference>
<comment type="function">
    <text evidence="1">Endonuclease that resolves Holliday junction intermediates in genetic recombination. Cleaves mobile four-strand junctions by introducing symmetrical nicks in paired strands. Promotes annealing of linear ssDNA with homologous dsDNA. Required for DNA repair, homologous recombination and chromosome segregation.</text>
</comment>
<comment type="catalytic activity">
    <reaction evidence="1">
        <text>Endonucleolytic cleavage at a junction such as a reciprocal single-stranded crossover between two homologous DNA duplexes (Holliday junction).</text>
        <dbReference type="EC" id="3.1.21.10"/>
    </reaction>
</comment>
<comment type="cofactor">
    <cofactor evidence="1">
        <name>Mg(2+)</name>
        <dbReference type="ChEBI" id="CHEBI:18420"/>
    </cofactor>
    <text evidence="1">Binds 1 Mg(2+) ion per subunit.</text>
</comment>
<comment type="subcellular location">
    <subcellularLocation>
        <location evidence="1">Cytoplasm</location>
    </subcellularLocation>
</comment>
<comment type="similarity">
    <text evidence="1">Belongs to the RecU family.</text>
</comment>
<feature type="chain" id="PRO_1000095681" description="Holliday junction resolvase RecU">
    <location>
        <begin position="1"/>
        <end position="198"/>
    </location>
</feature>
<feature type="region of interest" description="Disordered" evidence="2">
    <location>
        <begin position="1"/>
        <end position="22"/>
    </location>
</feature>
<feature type="compositionally biased region" description="Polar residues" evidence="2">
    <location>
        <begin position="11"/>
        <end position="22"/>
    </location>
</feature>
<feature type="binding site" evidence="1">
    <location>
        <position position="81"/>
    </location>
    <ligand>
        <name>Mg(2+)</name>
        <dbReference type="ChEBI" id="CHEBI:18420"/>
    </ligand>
</feature>
<feature type="binding site" evidence="1">
    <location>
        <position position="83"/>
    </location>
    <ligand>
        <name>Mg(2+)</name>
        <dbReference type="ChEBI" id="CHEBI:18420"/>
    </ligand>
</feature>
<feature type="binding site" evidence="1">
    <location>
        <position position="96"/>
    </location>
    <ligand>
        <name>Mg(2+)</name>
        <dbReference type="ChEBI" id="CHEBI:18420"/>
    </ligand>
</feature>
<feature type="binding site" evidence="1">
    <location>
        <position position="115"/>
    </location>
    <ligand>
        <name>Mg(2+)</name>
        <dbReference type="ChEBI" id="CHEBI:18420"/>
    </ligand>
</feature>
<feature type="site" description="Transition state stabilizer" evidence="1">
    <location>
        <position position="98"/>
    </location>
</feature>
<keyword id="KW-0963">Cytoplasm</keyword>
<keyword id="KW-0227">DNA damage</keyword>
<keyword id="KW-0233">DNA recombination</keyword>
<keyword id="KW-0234">DNA repair</keyword>
<keyword id="KW-0255">Endonuclease</keyword>
<keyword id="KW-0378">Hydrolase</keyword>
<keyword id="KW-0460">Magnesium</keyword>
<keyword id="KW-0479">Metal-binding</keyword>
<keyword id="KW-0540">Nuclease</keyword>
<evidence type="ECO:0000255" key="1">
    <source>
        <dbReference type="HAMAP-Rule" id="MF_00130"/>
    </source>
</evidence>
<evidence type="ECO:0000256" key="2">
    <source>
        <dbReference type="SAM" id="MobiDB-lite"/>
    </source>
</evidence>
<organism>
    <name type="scientific">Streptococcus pneumoniae (strain Hungary19A-6)</name>
    <dbReference type="NCBI Taxonomy" id="487214"/>
    <lineage>
        <taxon>Bacteria</taxon>
        <taxon>Bacillati</taxon>
        <taxon>Bacillota</taxon>
        <taxon>Bacilli</taxon>
        <taxon>Lactobacillales</taxon>
        <taxon>Streptococcaceae</taxon>
        <taxon>Streptococcus</taxon>
    </lineage>
</organism>